<evidence type="ECO:0000255" key="1">
    <source>
        <dbReference type="HAMAP-Rule" id="MF_00028"/>
    </source>
</evidence>
<evidence type="ECO:0000305" key="2"/>
<organism>
    <name type="scientific">Prochlorococcus marinus (strain AS9601)</name>
    <dbReference type="NCBI Taxonomy" id="146891"/>
    <lineage>
        <taxon>Bacteria</taxon>
        <taxon>Bacillati</taxon>
        <taxon>Cyanobacteriota</taxon>
        <taxon>Cyanophyceae</taxon>
        <taxon>Synechococcales</taxon>
        <taxon>Prochlorococcaceae</taxon>
        <taxon>Prochlorococcus</taxon>
    </lineage>
</organism>
<name>COBQ_PROMS</name>
<proteinExistence type="inferred from homology"/>
<comment type="function">
    <text evidence="1">Catalyzes amidations at positions B, D, E, and G on adenosylcobyrinic A,C-diamide. NH(2) groups are provided by glutamine, and one molecule of ATP is hydrogenolyzed for each amidation.</text>
</comment>
<comment type="pathway">
    <text evidence="1">Cofactor biosynthesis; adenosylcobalamin biosynthesis.</text>
</comment>
<comment type="similarity">
    <text evidence="1">Belongs to the CobB/CobQ family. CobQ subfamily.</text>
</comment>
<comment type="sequence caution" evidence="2">
    <conflict type="erroneous initiation">
        <sequence resource="EMBL-CDS" id="ABM70621"/>
    </conflict>
</comment>
<reference key="1">
    <citation type="journal article" date="2007" name="PLoS Genet.">
        <title>Patterns and implications of gene gain and loss in the evolution of Prochlorococcus.</title>
        <authorList>
            <person name="Kettler G.C."/>
            <person name="Martiny A.C."/>
            <person name="Huang K."/>
            <person name="Zucker J."/>
            <person name="Coleman M.L."/>
            <person name="Rodrigue S."/>
            <person name="Chen F."/>
            <person name="Lapidus A."/>
            <person name="Ferriera S."/>
            <person name="Johnson J."/>
            <person name="Steglich C."/>
            <person name="Church G.M."/>
            <person name="Richardson P."/>
            <person name="Chisholm S.W."/>
        </authorList>
    </citation>
    <scope>NUCLEOTIDE SEQUENCE [LARGE SCALE GENOMIC DNA]</scope>
    <source>
        <strain>AS9601</strain>
    </source>
</reference>
<sequence length="509" mass="57417">MELEAKLHEIRKPIMVLGTSSGAGKSLTVTAICRILKNLGEEPIPFKGQNMSNNAWVDWEGGEMAYSQALQAFACGINPSAEMNPILLKPQGNSISEVIHLGKSIGITTASNYYKDWFIPGWEVIKKSLSSIYEKTPNCRLIIEGAGSPVEMNLIHRDLTNLRVAKYLNANCILVTDIERGGVFAQIIGTLELMKPEEKKLIKGIIINRFRGDLSLFAEGKKWIESKTQIPIIGIIPWLNDSFPPEDSLDLLEKKSRHTTAEIKVGIIKLPSISNFSDFDPLENEKSILIEWVRESQNLKKFDFIILPGSKQTIKDQIYLKESGLSQDIKEYSNNKGNIIGICGGLQMLGTSLEDPFFKEGSKSCLEQKIKGIGLLPLKTTFFEKKLTRQISSESLWPCHSKINGFEIHNGKTELVESENLLKIRPIFKDLDLGWYTEKKEGGTIAGTYIHGIFENDNWRDQYINLIRKSKNLPIFNKKSISYKKKRESIIDNLANEFDKHLNITSLLN</sequence>
<gene>
    <name evidence="1" type="primary">cobQ</name>
    <name type="ordered locus">A9601_13371</name>
</gene>
<keyword id="KW-0169">Cobalamin biosynthesis</keyword>
<keyword id="KW-0315">Glutamine amidotransferase</keyword>
<protein>
    <recommendedName>
        <fullName evidence="1">Cobyric acid synthase</fullName>
    </recommendedName>
</protein>
<accession>A2BS60</accession>
<dbReference type="EMBL" id="CP000551">
    <property type="protein sequence ID" value="ABM70621.1"/>
    <property type="status" value="ALT_INIT"/>
    <property type="molecule type" value="Genomic_DNA"/>
</dbReference>
<dbReference type="RefSeq" id="WP_041484551.1">
    <property type="nucleotide sequence ID" value="NC_008816.1"/>
</dbReference>
<dbReference type="SMR" id="A2BS60"/>
<dbReference type="STRING" id="146891.A9601_13371"/>
<dbReference type="KEGG" id="pmb:A9601_13371"/>
<dbReference type="eggNOG" id="COG1492">
    <property type="taxonomic scope" value="Bacteria"/>
</dbReference>
<dbReference type="HOGENOM" id="CLU_019250_2_2_3"/>
<dbReference type="OrthoDB" id="9808302at2"/>
<dbReference type="UniPathway" id="UPA00148"/>
<dbReference type="Proteomes" id="UP000002590">
    <property type="component" value="Chromosome"/>
</dbReference>
<dbReference type="GO" id="GO:0015420">
    <property type="term" value="F:ABC-type vitamin B12 transporter activity"/>
    <property type="evidence" value="ECO:0007669"/>
    <property type="project" value="UniProtKB-UniRule"/>
</dbReference>
<dbReference type="GO" id="GO:0003824">
    <property type="term" value="F:catalytic activity"/>
    <property type="evidence" value="ECO:0007669"/>
    <property type="project" value="InterPro"/>
</dbReference>
<dbReference type="GO" id="GO:0009236">
    <property type="term" value="P:cobalamin biosynthetic process"/>
    <property type="evidence" value="ECO:0007669"/>
    <property type="project" value="UniProtKB-UniRule"/>
</dbReference>
<dbReference type="CDD" id="cd01750">
    <property type="entry name" value="GATase1_CobQ"/>
    <property type="match status" value="1"/>
</dbReference>
<dbReference type="Gene3D" id="3.40.50.880">
    <property type="match status" value="1"/>
</dbReference>
<dbReference type="Gene3D" id="3.40.50.300">
    <property type="entry name" value="P-loop containing nucleotide triphosphate hydrolases"/>
    <property type="match status" value="1"/>
</dbReference>
<dbReference type="HAMAP" id="MF_00028">
    <property type="entry name" value="CobQ"/>
    <property type="match status" value="1"/>
</dbReference>
<dbReference type="InterPro" id="IPR029062">
    <property type="entry name" value="Class_I_gatase-like"/>
</dbReference>
<dbReference type="InterPro" id="IPR002586">
    <property type="entry name" value="CobQ/CobB/MinD/ParA_Nub-bd_dom"/>
</dbReference>
<dbReference type="InterPro" id="IPR033949">
    <property type="entry name" value="CobQ_GATase1"/>
</dbReference>
<dbReference type="InterPro" id="IPR004459">
    <property type="entry name" value="CobQ_synth"/>
</dbReference>
<dbReference type="InterPro" id="IPR011698">
    <property type="entry name" value="GATase_3"/>
</dbReference>
<dbReference type="InterPro" id="IPR027417">
    <property type="entry name" value="P-loop_NTPase"/>
</dbReference>
<dbReference type="NCBIfam" id="TIGR00313">
    <property type="entry name" value="cobQ"/>
    <property type="match status" value="1"/>
</dbReference>
<dbReference type="NCBIfam" id="NF001989">
    <property type="entry name" value="PRK00784.1"/>
    <property type="match status" value="1"/>
</dbReference>
<dbReference type="PANTHER" id="PTHR21343:SF1">
    <property type="entry name" value="COBYRIC ACID SYNTHASE"/>
    <property type="match status" value="1"/>
</dbReference>
<dbReference type="PANTHER" id="PTHR21343">
    <property type="entry name" value="DETHIOBIOTIN SYNTHETASE"/>
    <property type="match status" value="1"/>
</dbReference>
<dbReference type="Pfam" id="PF01656">
    <property type="entry name" value="CbiA"/>
    <property type="match status" value="1"/>
</dbReference>
<dbReference type="Pfam" id="PF07685">
    <property type="entry name" value="GATase_3"/>
    <property type="match status" value="1"/>
</dbReference>
<dbReference type="SUPFAM" id="SSF52317">
    <property type="entry name" value="Class I glutamine amidotransferase-like"/>
    <property type="match status" value="1"/>
</dbReference>
<dbReference type="SUPFAM" id="SSF52540">
    <property type="entry name" value="P-loop containing nucleoside triphosphate hydrolases"/>
    <property type="match status" value="1"/>
</dbReference>
<dbReference type="PROSITE" id="PS51274">
    <property type="entry name" value="GATASE_COBBQ"/>
    <property type="match status" value="1"/>
</dbReference>
<feature type="chain" id="PRO_0000332361" description="Cobyric acid synthase">
    <location>
        <begin position="1"/>
        <end position="509"/>
    </location>
</feature>
<feature type="domain" description="GATase cobBQ-type" evidence="1">
    <location>
        <begin position="262"/>
        <end position="459"/>
    </location>
</feature>
<feature type="active site" description="Nucleophile" evidence="1">
    <location>
        <position position="343"/>
    </location>
</feature>
<feature type="active site" evidence="1">
    <location>
        <position position="451"/>
    </location>
</feature>